<reference key="1">
    <citation type="submission" date="2003-03" db="EMBL/GenBank/DDBJ databases">
        <title>African swine fever virus genomes.</title>
        <authorList>
            <person name="Kutish G.F."/>
            <person name="Rock D.L."/>
        </authorList>
    </citation>
    <scope>NUCLEOTIDE SEQUENCE [LARGE SCALE GENOMIC DNA]</scope>
</reference>
<gene>
    <name type="ordered locus">War-146</name>
</gene>
<feature type="chain" id="PRO_0000373768" description="Uncharacterized protein E66L">
    <location>
        <begin position="1"/>
        <end position="26"/>
    </location>
</feature>
<proteinExistence type="inferred from homology"/>
<name>VFE66_ASFWA</name>
<organismHost>
    <name type="scientific">Ornithodoros</name>
    <name type="common">relapsing fever ticks</name>
    <dbReference type="NCBI Taxonomy" id="6937"/>
</organismHost>
<organismHost>
    <name type="scientific">Phacochoerus aethiopicus</name>
    <name type="common">Warthog</name>
    <dbReference type="NCBI Taxonomy" id="85517"/>
</organismHost>
<organismHost>
    <name type="scientific">Phacochoerus africanus</name>
    <name type="common">Warthog</name>
    <dbReference type="NCBI Taxonomy" id="41426"/>
</organismHost>
<organismHost>
    <name type="scientific">Potamochoerus larvatus</name>
    <name type="common">Bushpig</name>
    <dbReference type="NCBI Taxonomy" id="273792"/>
</organismHost>
<organismHost>
    <name type="scientific">Sus scrofa</name>
    <name type="common">Pig</name>
    <dbReference type="NCBI Taxonomy" id="9823"/>
</organismHost>
<protein>
    <recommendedName>
        <fullName>Uncharacterized protein E66L</fullName>
        <shortName>pE66L</shortName>
    </recommendedName>
</protein>
<organism>
    <name type="scientific">African swine fever virus (isolate Warthog/Namibia/Wart80/1980)</name>
    <name type="common">ASFV</name>
    <dbReference type="NCBI Taxonomy" id="561444"/>
    <lineage>
        <taxon>Viruses</taxon>
        <taxon>Varidnaviria</taxon>
        <taxon>Bamfordvirae</taxon>
        <taxon>Nucleocytoviricota</taxon>
        <taxon>Pokkesviricetes</taxon>
        <taxon>Asfuvirales</taxon>
        <taxon>Asfarviridae</taxon>
        <taxon>Asfivirus</taxon>
        <taxon>African swine fever virus</taxon>
    </lineage>
</organism>
<comment type="similarity">
    <text evidence="1">Belongs to the asfivirus E66L family.</text>
</comment>
<evidence type="ECO:0000305" key="1"/>
<sequence length="26" mass="3301">MLKYIYMHLSHKYNHILFTYNTRIIS</sequence>
<accession>P0CAN2</accession>
<dbReference type="EMBL" id="AY261366">
    <property type="status" value="NOT_ANNOTATED_CDS"/>
    <property type="molecule type" value="Genomic_DNA"/>
</dbReference>
<dbReference type="Proteomes" id="UP000000858">
    <property type="component" value="Segment"/>
</dbReference>